<protein>
    <recommendedName>
        <fullName evidence="1">NADH-ubiquinone oxidoreductase chain 1</fullName>
        <ecNumber evidence="1">7.1.1.2</ecNumber>
    </recommendedName>
    <alternativeName>
        <fullName evidence="1">NADH dehydrogenase subunit 1</fullName>
    </alternativeName>
</protein>
<name>NU1M_HYACU</name>
<gene>
    <name evidence="1" type="primary">nd1</name>
    <name evidence="3" type="synonym">nad1</name>
</gene>
<sequence length="297" mass="33187">MKSLIVALAIVLAVAFMTLAERKLMGSIQRRLGPNHVGFLGLLQPFADGIKLILKETVLPLEANHWLFVLAPFLSFYLALLNWLVIPLAKGVVLMDMDLSILLILAISSLGVYAIIYTGWSANSKYTLLGSLRSTAQMVSYEIAMSLLVLTVVYMGATLNLTELAYLNSGTVLLWSLWPMAMIGFVAALAETNRAPFDLPEAESELVAGFMTEHSAISFTFLFLGEYANIITISTVLNLMFLGFYNPLVIYLFIWIRATLPRLRFDQLLRLGWQYLLPFLIGFLMIQPSTLFVLDLF</sequence>
<feature type="chain" id="PRO_0000411057" description="NADH-ubiquinone oxidoreductase chain 1">
    <location>
        <begin position="1"/>
        <end position="297"/>
    </location>
</feature>
<feature type="transmembrane region" description="Helical" evidence="2">
    <location>
        <begin position="1"/>
        <end position="21"/>
    </location>
</feature>
<feature type="transmembrane region" description="Helical" evidence="2">
    <location>
        <begin position="34"/>
        <end position="54"/>
    </location>
</feature>
<feature type="transmembrane region" description="Helical" evidence="2">
    <location>
        <begin position="66"/>
        <end position="86"/>
    </location>
</feature>
<feature type="transmembrane region" description="Helical" evidence="2">
    <location>
        <begin position="99"/>
        <end position="119"/>
    </location>
</feature>
<feature type="transmembrane region" description="Helical" evidence="2">
    <location>
        <begin position="139"/>
        <end position="159"/>
    </location>
</feature>
<feature type="transmembrane region" description="Helical" evidence="2">
    <location>
        <begin position="170"/>
        <end position="190"/>
    </location>
</feature>
<feature type="transmembrane region" description="Helical" evidence="2">
    <location>
        <begin position="206"/>
        <end position="228"/>
    </location>
</feature>
<feature type="transmembrane region" description="Helical" evidence="2">
    <location>
        <begin position="235"/>
        <end position="257"/>
    </location>
</feature>
<feature type="transmembrane region" description="Helical" evidence="2">
    <location>
        <begin position="277"/>
        <end position="297"/>
    </location>
</feature>
<comment type="function">
    <text evidence="1">Core subunit of the mitochondrial membrane respiratory chain NADH dehydrogenase (Complex I) that is believed to belong to the minimal assembly required for catalysis. Complex I functions in the transfer of electrons from NADH to the respiratory chain. The immediate electron acceptor for the enzyme is believed to be ubiquinone (By similarity).</text>
</comment>
<comment type="catalytic activity">
    <reaction>
        <text>a ubiquinone + NADH + 5 H(+)(in) = a ubiquinol + NAD(+) + 4 H(+)(out)</text>
        <dbReference type="Rhea" id="RHEA:29091"/>
        <dbReference type="Rhea" id="RHEA-COMP:9565"/>
        <dbReference type="Rhea" id="RHEA-COMP:9566"/>
        <dbReference type="ChEBI" id="CHEBI:15378"/>
        <dbReference type="ChEBI" id="CHEBI:16389"/>
        <dbReference type="ChEBI" id="CHEBI:17976"/>
        <dbReference type="ChEBI" id="CHEBI:57540"/>
        <dbReference type="ChEBI" id="CHEBI:57945"/>
        <dbReference type="EC" id="7.1.1.2"/>
    </reaction>
</comment>
<comment type="subcellular location">
    <subcellularLocation>
        <location evidence="1">Mitochondrion inner membrane</location>
        <topology evidence="1">Multi-pass membrane protein</topology>
    </subcellularLocation>
</comment>
<comment type="similarity">
    <text evidence="2">Belongs to the complex I subunit 1 family.</text>
</comment>
<evidence type="ECO:0000250" key="1">
    <source>
        <dbReference type="UniProtKB" id="P03887"/>
    </source>
</evidence>
<evidence type="ECO:0000255" key="2"/>
<evidence type="ECO:0000312" key="3">
    <source>
        <dbReference type="EMBL" id="AAK83418.1"/>
    </source>
</evidence>
<dbReference type="EC" id="7.1.1.2" evidence="1"/>
<dbReference type="EMBL" id="AF402142">
    <property type="protein sequence ID" value="AAK83418.1"/>
    <property type="molecule type" value="Genomic_DNA"/>
</dbReference>
<dbReference type="RefSeq" id="NP_150096.1">
    <property type="nucleotide sequence ID" value="NC_003048.1"/>
</dbReference>
<dbReference type="SMR" id="Q950U8"/>
<dbReference type="GeneID" id="803624"/>
<dbReference type="GO" id="GO:0005743">
    <property type="term" value="C:mitochondrial inner membrane"/>
    <property type="evidence" value="ECO:0007669"/>
    <property type="project" value="UniProtKB-SubCell"/>
</dbReference>
<dbReference type="GO" id="GO:0008137">
    <property type="term" value="F:NADH dehydrogenase (ubiquinone) activity"/>
    <property type="evidence" value="ECO:0007669"/>
    <property type="project" value="UniProtKB-EC"/>
</dbReference>
<dbReference type="GO" id="GO:0009060">
    <property type="term" value="P:aerobic respiration"/>
    <property type="evidence" value="ECO:0007669"/>
    <property type="project" value="TreeGrafter"/>
</dbReference>
<dbReference type="HAMAP" id="MF_01350">
    <property type="entry name" value="NDH1_NuoH"/>
    <property type="match status" value="1"/>
</dbReference>
<dbReference type="InterPro" id="IPR001694">
    <property type="entry name" value="NADH_UbQ_OxRdtase_su1/FPO"/>
</dbReference>
<dbReference type="InterPro" id="IPR018086">
    <property type="entry name" value="NADH_UbQ_OxRdtase_su1_CS"/>
</dbReference>
<dbReference type="PANTHER" id="PTHR11432">
    <property type="entry name" value="NADH DEHYDROGENASE SUBUNIT 1"/>
    <property type="match status" value="1"/>
</dbReference>
<dbReference type="PANTHER" id="PTHR11432:SF3">
    <property type="entry name" value="NADH-UBIQUINONE OXIDOREDUCTASE CHAIN 1"/>
    <property type="match status" value="1"/>
</dbReference>
<dbReference type="Pfam" id="PF00146">
    <property type="entry name" value="NADHdh"/>
    <property type="match status" value="1"/>
</dbReference>
<dbReference type="PROSITE" id="PS00667">
    <property type="entry name" value="COMPLEX1_ND1_1"/>
    <property type="match status" value="1"/>
</dbReference>
<dbReference type="PROSITE" id="PS00668">
    <property type="entry name" value="COMPLEX1_ND1_2"/>
    <property type="match status" value="1"/>
</dbReference>
<reference evidence="3" key="1">
    <citation type="journal article" date="2002" name="Mol. Biol. Evol.">
        <title>Hyaloraphidium curvatum: a linear mitochondrial genome, tRNA editing, and an evolutionary link to lower fungi.</title>
        <authorList>
            <person name="Forget L."/>
            <person name="Ustinova J."/>
            <person name="Wang Z."/>
            <person name="Huss V.A.R."/>
            <person name="Lang B.F."/>
        </authorList>
    </citation>
    <scope>NUCLEOTIDE SEQUENCE [LARGE SCALE GENOMIC DNA]</scope>
    <source>
        <strain>SAG 235-1 / CCAP 235/1</strain>
    </source>
</reference>
<geneLocation type="mitochondrion" evidence="3"/>
<organism>
    <name type="scientific">Hyaloraphidium curvatum</name>
    <name type="common">Lower fungus</name>
    <dbReference type="NCBI Taxonomy" id="82268"/>
    <lineage>
        <taxon>Eukaryota</taxon>
        <taxon>Fungi</taxon>
        <taxon>Fungi incertae sedis</taxon>
        <taxon>Chytridiomycota</taxon>
        <taxon>Chytridiomycota incertae sedis</taxon>
        <taxon>Monoblepharidomycetes</taxon>
        <taxon>Monoblepharidales</taxon>
        <taxon>Monoblepharidales incertae sedis</taxon>
        <taxon>Hyaloraphidium</taxon>
    </lineage>
</organism>
<keyword id="KW-0249">Electron transport</keyword>
<keyword id="KW-0472">Membrane</keyword>
<keyword id="KW-0496">Mitochondrion</keyword>
<keyword id="KW-0999">Mitochondrion inner membrane</keyword>
<keyword id="KW-0520">NAD</keyword>
<keyword id="KW-0679">Respiratory chain</keyword>
<keyword id="KW-1278">Translocase</keyword>
<keyword id="KW-0812">Transmembrane</keyword>
<keyword id="KW-1133">Transmembrane helix</keyword>
<keyword id="KW-0813">Transport</keyword>
<keyword id="KW-0830">Ubiquinone</keyword>
<accession>Q950U8</accession>
<proteinExistence type="inferred from homology"/>